<feature type="chain" id="PRO_1000127307" description="Large ribosomal subunit protein bL35">
    <location>
        <begin position="1"/>
        <end position="66"/>
    </location>
</feature>
<feature type="region of interest" description="Disordered" evidence="2">
    <location>
        <begin position="1"/>
        <end position="26"/>
    </location>
</feature>
<protein>
    <recommendedName>
        <fullName evidence="1">Large ribosomal subunit protein bL35</fullName>
    </recommendedName>
    <alternativeName>
        <fullName evidence="3">50S ribosomal protein L35</fullName>
    </alternativeName>
</protein>
<accession>B7HRL3</accession>
<comment type="similarity">
    <text evidence="1">Belongs to the bacterial ribosomal protein bL35 family.</text>
</comment>
<reference key="1">
    <citation type="submission" date="2008-10" db="EMBL/GenBank/DDBJ databases">
        <title>Genome sequence of Bacillus cereus AH187.</title>
        <authorList>
            <person name="Dodson R.J."/>
            <person name="Durkin A.S."/>
            <person name="Rosovitz M.J."/>
            <person name="Rasko D.A."/>
            <person name="Kolsto A.B."/>
            <person name="Okstad O.A."/>
            <person name="Ravel J."/>
            <person name="Sutton G."/>
        </authorList>
    </citation>
    <scope>NUCLEOTIDE SEQUENCE [LARGE SCALE GENOMIC DNA]</scope>
    <source>
        <strain>AH187</strain>
    </source>
</reference>
<gene>
    <name evidence="1" type="primary">rpmI</name>
    <name type="ordered locus">BCAH187_A4698</name>
</gene>
<evidence type="ECO:0000255" key="1">
    <source>
        <dbReference type="HAMAP-Rule" id="MF_00514"/>
    </source>
</evidence>
<evidence type="ECO:0000256" key="2">
    <source>
        <dbReference type="SAM" id="MobiDB-lite"/>
    </source>
</evidence>
<evidence type="ECO:0000305" key="3"/>
<proteinExistence type="inferred from homology"/>
<organism>
    <name type="scientific">Bacillus cereus (strain AH187)</name>
    <dbReference type="NCBI Taxonomy" id="405534"/>
    <lineage>
        <taxon>Bacteria</taxon>
        <taxon>Bacillati</taxon>
        <taxon>Bacillota</taxon>
        <taxon>Bacilli</taxon>
        <taxon>Bacillales</taxon>
        <taxon>Bacillaceae</taxon>
        <taxon>Bacillus</taxon>
        <taxon>Bacillus cereus group</taxon>
    </lineage>
</organism>
<sequence length="66" mass="7496">MPKQKTHRGAAKRFKKTGSGKLKRSHAYTSHLFANKSTKAKRKLRKAGVVSAGDFKRIRQMLDNLK</sequence>
<dbReference type="EMBL" id="CP001177">
    <property type="protein sequence ID" value="ACJ80965.1"/>
    <property type="molecule type" value="Genomic_DNA"/>
</dbReference>
<dbReference type="SMR" id="B7HRL3"/>
<dbReference type="KEGG" id="bcr:BCAH187_A4698"/>
<dbReference type="HOGENOM" id="CLU_169643_3_0_9"/>
<dbReference type="Proteomes" id="UP000002214">
    <property type="component" value="Chromosome"/>
</dbReference>
<dbReference type="GO" id="GO:0022625">
    <property type="term" value="C:cytosolic large ribosomal subunit"/>
    <property type="evidence" value="ECO:0007669"/>
    <property type="project" value="TreeGrafter"/>
</dbReference>
<dbReference type="GO" id="GO:0003735">
    <property type="term" value="F:structural constituent of ribosome"/>
    <property type="evidence" value="ECO:0007669"/>
    <property type="project" value="InterPro"/>
</dbReference>
<dbReference type="GO" id="GO:0006412">
    <property type="term" value="P:translation"/>
    <property type="evidence" value="ECO:0007669"/>
    <property type="project" value="UniProtKB-UniRule"/>
</dbReference>
<dbReference type="FunFam" id="4.10.410.60:FF:000001">
    <property type="entry name" value="50S ribosomal protein L35"/>
    <property type="match status" value="1"/>
</dbReference>
<dbReference type="Gene3D" id="4.10.410.60">
    <property type="match status" value="1"/>
</dbReference>
<dbReference type="HAMAP" id="MF_00514">
    <property type="entry name" value="Ribosomal_bL35"/>
    <property type="match status" value="1"/>
</dbReference>
<dbReference type="InterPro" id="IPR001706">
    <property type="entry name" value="Ribosomal_bL35"/>
</dbReference>
<dbReference type="InterPro" id="IPR021137">
    <property type="entry name" value="Ribosomal_bL35-like"/>
</dbReference>
<dbReference type="InterPro" id="IPR018265">
    <property type="entry name" value="Ribosomal_bL35_CS"/>
</dbReference>
<dbReference type="InterPro" id="IPR037229">
    <property type="entry name" value="Ribosomal_bL35_sf"/>
</dbReference>
<dbReference type="NCBIfam" id="TIGR00001">
    <property type="entry name" value="rpmI_bact"/>
    <property type="match status" value="1"/>
</dbReference>
<dbReference type="PANTHER" id="PTHR33343">
    <property type="entry name" value="54S RIBOSOMAL PROTEIN BL35M"/>
    <property type="match status" value="1"/>
</dbReference>
<dbReference type="PANTHER" id="PTHR33343:SF1">
    <property type="entry name" value="LARGE RIBOSOMAL SUBUNIT PROTEIN BL35M"/>
    <property type="match status" value="1"/>
</dbReference>
<dbReference type="Pfam" id="PF01632">
    <property type="entry name" value="Ribosomal_L35p"/>
    <property type="match status" value="1"/>
</dbReference>
<dbReference type="PRINTS" id="PR00064">
    <property type="entry name" value="RIBOSOMALL35"/>
</dbReference>
<dbReference type="SUPFAM" id="SSF143034">
    <property type="entry name" value="L35p-like"/>
    <property type="match status" value="1"/>
</dbReference>
<dbReference type="PROSITE" id="PS00936">
    <property type="entry name" value="RIBOSOMAL_L35"/>
    <property type="match status" value="1"/>
</dbReference>
<name>RL35_BACC7</name>
<keyword id="KW-0687">Ribonucleoprotein</keyword>
<keyword id="KW-0689">Ribosomal protein</keyword>